<reference key="1">
    <citation type="journal article" date="1994" name="J. Bacteriol.">
        <title>Phylogeny of mycoplasmalike organisms (phytoplasmas): a basis for their classification.</title>
        <authorList>
            <person name="Gundersen D.E."/>
            <person name="Lee I.M."/>
            <person name="Rehner S.A."/>
            <person name="Davis R.E."/>
            <person name="Kingsbury D.T."/>
        </authorList>
    </citation>
    <scope>NUCLEOTIDE SEQUENCE [GENOMIC DNA]</scope>
</reference>
<protein>
    <recommendedName>
        <fullName evidence="2">Small ribosomal subunit protein uS19</fullName>
    </recommendedName>
    <alternativeName>
        <fullName>30S ribosomal protein S19</fullName>
    </alternativeName>
</protein>
<comment type="function">
    <text evidence="1">Protein S19 forms a complex with S13 that binds strongly to the 16S ribosomal RNA.</text>
</comment>
<comment type="similarity">
    <text evidence="2">Belongs to the universal ribosomal protein uS19 family.</text>
</comment>
<accession>Q46228</accession>
<dbReference type="EMBL" id="L27011">
    <property type="protein sequence ID" value="AAA83938.1"/>
    <property type="molecule type" value="Genomic_DNA"/>
</dbReference>
<dbReference type="GO" id="GO:1990904">
    <property type="term" value="C:ribonucleoprotein complex"/>
    <property type="evidence" value="ECO:0007669"/>
    <property type="project" value="UniProtKB-KW"/>
</dbReference>
<dbReference type="GO" id="GO:0005840">
    <property type="term" value="C:ribosome"/>
    <property type="evidence" value="ECO:0007669"/>
    <property type="project" value="UniProtKB-KW"/>
</dbReference>
<dbReference type="GO" id="GO:0019843">
    <property type="term" value="F:rRNA binding"/>
    <property type="evidence" value="ECO:0007669"/>
    <property type="project" value="UniProtKB-KW"/>
</dbReference>
<keyword id="KW-0687">Ribonucleoprotein</keyword>
<keyword id="KW-0689">Ribosomal protein</keyword>
<keyword id="KW-0694">RNA-binding</keyword>
<keyword id="KW-0699">rRNA-binding</keyword>
<evidence type="ECO:0000250" key="1"/>
<evidence type="ECO:0000305" key="2"/>
<proteinExistence type="inferred from homology"/>
<name>RS19_CLOPP</name>
<sequence length="14" mass="1642">FRGHAKGDKKNQKK</sequence>
<organism>
    <name type="scientific">Clover proliferation phytoplasma</name>
    <dbReference type="NCBI Taxonomy" id="35776"/>
    <lineage>
        <taxon>Bacteria</taxon>
        <taxon>Bacillati</taxon>
        <taxon>Mycoplasmatota</taxon>
        <taxon>Mollicutes</taxon>
        <taxon>Acholeplasmatales</taxon>
        <taxon>Acholeplasmataceae</taxon>
        <taxon>Candidatus Phytoplasma</taxon>
        <taxon>16SrVI (Clover proliferation group)</taxon>
    </lineage>
</organism>
<gene>
    <name type="primary">rpsS</name>
    <name type="synonym">rps19</name>
</gene>
<feature type="chain" id="PRO_0000129810" description="Small ribosomal subunit protein uS19">
    <location>
        <begin position="1" status="less than"/>
        <end position="14"/>
    </location>
</feature>
<feature type="non-terminal residue">
    <location>
        <position position="1"/>
    </location>
</feature>